<feature type="chain" id="PRO_0000097284" description="O-antigen ligase">
    <location>
        <begin position="1"/>
        <end position="419"/>
    </location>
</feature>
<feature type="topological domain" description="Cytoplasmic" evidence="5">
    <location>
        <begin position="1"/>
        <end position="19"/>
    </location>
</feature>
<feature type="transmembrane region" description="Helical; Name=1" evidence="5">
    <location>
        <begin position="20"/>
        <end position="38"/>
    </location>
</feature>
<feature type="topological domain" description="Periplasmic" evidence="5">
    <location>
        <begin position="39"/>
        <end position="43"/>
    </location>
</feature>
<feature type="transmembrane region" description="Helical; Name=2" evidence="5">
    <location>
        <begin position="44"/>
        <end position="61"/>
    </location>
</feature>
<feature type="topological domain" description="Cytoplasmic" evidence="5">
    <location>
        <begin position="62"/>
        <end position="71"/>
    </location>
</feature>
<feature type="transmembrane region" description="Helical; Name=3" evidence="5">
    <location>
        <begin position="72"/>
        <end position="91"/>
    </location>
</feature>
<feature type="topological domain" description="Periplasmic" evidence="5">
    <location>
        <begin position="92"/>
        <end position="107"/>
    </location>
</feature>
<feature type="transmembrane region" description="Helical; Name=4" evidence="5">
    <location>
        <begin position="108"/>
        <end position="125"/>
    </location>
</feature>
<feature type="topological domain" description="Cytoplasmic" evidence="5">
    <location>
        <begin position="126"/>
        <end position="134"/>
    </location>
</feature>
<feature type="transmembrane region" description="Helical; Name=5" evidence="5">
    <location>
        <begin position="135"/>
        <end position="153"/>
    </location>
</feature>
<feature type="topological domain" description="Periplasmic" evidence="5">
    <location>
        <begin position="154"/>
        <end position="167"/>
    </location>
</feature>
<feature type="transmembrane region" description="Helical; Name=6" evidence="5">
    <location>
        <begin position="168"/>
        <end position="187"/>
    </location>
</feature>
<feature type="topological domain" description="Cytoplasmic" evidence="5">
    <location>
        <begin position="188"/>
        <end position="194"/>
    </location>
</feature>
<feature type="transmembrane region" description="Helical; Name=7" evidence="5">
    <location>
        <begin position="195"/>
        <end position="211"/>
    </location>
</feature>
<feature type="topological domain" description="Periplasmic" evidence="5">
    <location>
        <begin position="212"/>
        <end position="216"/>
    </location>
</feature>
<feature type="transmembrane region" description="Helical; Name=8" evidence="5">
    <location>
        <begin position="217"/>
        <end position="234"/>
    </location>
</feature>
<feature type="topological domain" description="Cytoplasmic" evidence="5">
    <location>
        <begin position="235"/>
        <end position="240"/>
    </location>
</feature>
<feature type="transmembrane region" description="Helical; Name=9" evidence="5">
    <location>
        <begin position="241"/>
        <end position="259"/>
    </location>
</feature>
<feature type="topological domain" description="Periplasmic" evidence="3 5">
    <location>
        <begin position="260"/>
        <end position="348"/>
    </location>
</feature>
<feature type="transmembrane region" description="Helical; Name=10" evidence="5">
    <location>
        <begin position="349"/>
        <end position="367"/>
    </location>
</feature>
<feature type="topological domain" description="Cytoplasmic" evidence="5">
    <location>
        <begin position="368"/>
        <end position="372"/>
    </location>
</feature>
<feature type="transmembrane region" description="Helical; Name=11" evidence="5">
    <location>
        <begin position="373"/>
        <end position="391"/>
    </location>
</feature>
<feature type="topological domain" description="Periplasmic" evidence="5">
    <location>
        <begin position="392"/>
        <end position="396"/>
    </location>
</feature>
<feature type="transmembrane region" description="Helical; Name=12" evidence="5">
    <location>
        <begin position="397"/>
        <end position="412"/>
    </location>
</feature>
<feature type="topological domain" description="Cytoplasmic" evidence="1 3 5">
    <location>
        <begin position="413"/>
        <end position="419"/>
    </location>
</feature>
<feature type="mutagenesis site" description="Loss of activity." evidence="4">
    <original>R</original>
    <variation>A</variation>
    <location>
        <position position="215"/>
    </location>
</feature>
<feature type="mutagenesis site" description="No change in activity." evidence="4">
    <original>R</original>
    <variation>K</variation>
    <location>
        <position position="215"/>
    </location>
</feature>
<feature type="mutagenesis site" description="Leads to a reduced O-antigen surface expression." evidence="3">
    <original>R</original>
    <variation>A</variation>
    <location>
        <position position="265"/>
    </location>
</feature>
<feature type="mutagenesis site" description="Leads to a reduced O-antigen surface expression." evidence="3">
    <original>D</original>
    <variation>A</variation>
    <location>
        <position position="272"/>
    </location>
</feature>
<feature type="mutagenesis site" description="Leads to a reduced O-antigen surface expression." evidence="3">
    <original>G</original>
    <variation>A</variation>
    <location>
        <position position="286"/>
    </location>
</feature>
<feature type="mutagenesis site" description="Loss of activity." evidence="3 4">
    <original>R</original>
    <variation>A</variation>
    <location>
        <position position="288"/>
    </location>
</feature>
<feature type="mutagenesis site" description="No change in activity." evidence="3">
    <original>P</original>
    <variation>A</variation>
    <location>
        <position position="303"/>
    </location>
</feature>
<feature type="mutagenesis site" description="Loss of activity." evidence="4">
    <original>H</original>
    <variation>A</variation>
    <location>
        <position position="338"/>
    </location>
</feature>
<feature type="mutagenesis site" description="Loss of activity." evidence="4">
    <original>D</original>
    <variation>A</variation>
    <location>
        <position position="389"/>
    </location>
</feature>
<feature type="sequence conflict" description="In Ref. 1; AAA24524." evidence="11" ref="1">
    <original>VLYVLALTQTRATLLLFPII</original>
    <variation>GTLCSGANTNQSNPTPVPYN</variation>
    <location>
        <begin position="205"/>
        <end position="224"/>
    </location>
</feature>
<feature type="sequence conflict" description="In Ref. 1; AAA24524." evidence="11" ref="1">
    <original>R</original>
    <variation>T</variation>
    <location>
        <position position="307"/>
    </location>
</feature>
<feature type="sequence conflict" description="In Ref. 1; AAA24524." evidence="11" ref="1">
    <original>A</original>
    <variation>R</variation>
    <location>
        <position position="344"/>
    </location>
</feature>
<gene>
    <name evidence="9" type="primary">waaL</name>
    <name evidence="7" type="synonym">rfaL</name>
    <name type="ordered locus">b3622</name>
    <name type="ordered locus">JW3597</name>
</gene>
<reference key="1">
    <citation type="journal article" date="1992" name="J. Bacteriol.">
        <title>Comparison of lipopolysaccharide biosynthesis genes rfaK, rfaL, rfaY, and rfaZ of Escherichia coli K-12 and Salmonella typhimurium.</title>
        <authorList>
            <person name="Klena J.D."/>
            <person name="Pradel E."/>
            <person name="Schnaitman C.A."/>
        </authorList>
    </citation>
    <scope>NUCLEOTIDE SEQUENCE [GENOMIC DNA]</scope>
    <source>
        <strain>K12</strain>
    </source>
</reference>
<reference key="2">
    <citation type="journal article" date="1994" name="Nucleic Acids Res.">
        <title>Analysis of the Escherichia coli genome. V. DNA sequence of the region from 76.0 to 81.5 minutes.</title>
        <authorList>
            <person name="Sofia H.J."/>
            <person name="Burland V."/>
            <person name="Daniels D.L."/>
            <person name="Plunkett G. III"/>
            <person name="Blattner F.R."/>
        </authorList>
    </citation>
    <scope>NUCLEOTIDE SEQUENCE [LARGE SCALE GENOMIC DNA]</scope>
    <source>
        <strain>K12 / MG1655 / ATCC 47076</strain>
    </source>
</reference>
<reference key="3">
    <citation type="journal article" date="1997" name="Science">
        <title>The complete genome sequence of Escherichia coli K-12.</title>
        <authorList>
            <person name="Blattner F.R."/>
            <person name="Plunkett G. III"/>
            <person name="Bloch C.A."/>
            <person name="Perna N.T."/>
            <person name="Burland V."/>
            <person name="Riley M."/>
            <person name="Collado-Vides J."/>
            <person name="Glasner J.D."/>
            <person name="Rode C.K."/>
            <person name="Mayhew G.F."/>
            <person name="Gregor J."/>
            <person name="Davis N.W."/>
            <person name="Kirkpatrick H.A."/>
            <person name="Goeden M.A."/>
            <person name="Rose D.J."/>
            <person name="Mau B."/>
            <person name="Shao Y."/>
        </authorList>
    </citation>
    <scope>NUCLEOTIDE SEQUENCE [LARGE SCALE GENOMIC DNA]</scope>
    <source>
        <strain>K12 / MG1655 / ATCC 47076</strain>
    </source>
</reference>
<reference key="4">
    <citation type="journal article" date="2006" name="Mol. Syst. Biol.">
        <title>Highly accurate genome sequences of Escherichia coli K-12 strains MG1655 and W3110.</title>
        <authorList>
            <person name="Hayashi K."/>
            <person name="Morooka N."/>
            <person name="Yamamoto Y."/>
            <person name="Fujita K."/>
            <person name="Isono K."/>
            <person name="Choi S."/>
            <person name="Ohtsubo E."/>
            <person name="Baba T."/>
            <person name="Wanner B.L."/>
            <person name="Mori H."/>
            <person name="Horiuchi T."/>
        </authorList>
    </citation>
    <scope>NUCLEOTIDE SEQUENCE [LARGE SCALE GENOMIC DNA]</scope>
    <source>
        <strain>K12 / W3110 / ATCC 27325 / DSM 5911</strain>
    </source>
</reference>
<reference key="5">
    <citation type="journal article" date="1996" name="Trends Microbiol.">
        <title>Bacterial polysaccharide synthesis and gene nomenclature.</title>
        <authorList>
            <person name="Reeves P.R."/>
            <person name="Hobbs M."/>
            <person name="Valvano M.A."/>
            <person name="Skurnik M."/>
            <person name="Whitfield C."/>
            <person name="Coplin D."/>
            <person name="Kido N."/>
            <person name="Klena J."/>
            <person name="Maskell D."/>
            <person name="Raetz C.R.H."/>
            <person name="Rick P.D."/>
        </authorList>
    </citation>
    <scope>NOMENCLATURE</scope>
</reference>
<reference key="6">
    <citation type="journal article" date="1997" name="Mol. Microbiol.">
        <title>Modulation of the surface architecture of gram-negative bacteria by the action of surface polymer:lipid A-core ligase and by determinants of polymer chain length.</title>
        <authorList>
            <person name="Whitfield C."/>
            <person name="Amor P.A."/>
            <person name="Koeplin R."/>
        </authorList>
    </citation>
    <scope>FUNCTION</scope>
    <scope>REVIEW</scope>
</reference>
<reference key="7">
    <citation type="journal article" date="2005" name="Science">
        <title>Global topology analysis of the Escherichia coli inner membrane proteome.</title>
        <authorList>
            <person name="Daley D.O."/>
            <person name="Rapp M."/>
            <person name="Granseth E."/>
            <person name="Melen K."/>
            <person name="Drew D."/>
            <person name="von Heijne G."/>
        </authorList>
    </citation>
    <scope>SUBCELLULAR LOCATION</scope>
    <scope>TOPOLOGY [LARGE SCALE ANALYSIS]</scope>
    <source>
        <strain>K12 / MG1655 / ATCC 47076</strain>
    </source>
</reference>
<reference key="8">
    <citation type="journal article" date="2007" name="J. Biol. Chem.">
        <title>Modification of lipopolysaccharide with colanic acid (M-antigen) repeats in Escherichia coli.</title>
        <authorList>
            <person name="Meredith T.C."/>
            <person name="Mamat U."/>
            <person name="Kaczynski Z."/>
            <person name="Lindner B."/>
            <person name="Holst O."/>
            <person name="Woodard R.W."/>
        </authorList>
    </citation>
    <scope>FUNCTION</scope>
    <scope>DISRUPTION PHENOTYPE</scope>
    <source>
        <strain>K12 / MG1655 / ATCC 47076</strain>
    </source>
</reference>
<reference key="9">
    <citation type="journal article" date="2008" name="Mol. Microbiol.">
        <title>Functional analysis of the large periplasmic loop of the Escherichia coli K-12 WaaL O-antigen ligase.</title>
        <authorList>
            <person name="Perez J.M."/>
            <person name="McGarry M.A."/>
            <person name="Marolda C.L."/>
            <person name="Valvano M.A."/>
        </authorList>
    </citation>
    <scope>SUBCELLULAR LOCATION</scope>
    <scope>TOPOLOGY</scope>
    <scope>MUTAGENESIS OF ARG-265; ASP-272; GLY-286; ARG-288 AND PRO-303</scope>
</reference>
<reference key="10">
    <citation type="journal article" date="2012" name="Glycobiology">
        <title>The WaaL O-antigen lipopolysaccharide ligase has features in common with metal ion-independent inverting glycosyltransferases.</title>
        <authorList>
            <person name="Ruan X."/>
            <person name="Loyola D.E."/>
            <person name="Marolda C.L."/>
            <person name="Perez-Donoso J.M."/>
            <person name="Valvano M.A."/>
        </authorList>
    </citation>
    <scope>FUNCTION</scope>
    <scope>CATALYTIC ACTIVITY</scope>
    <scope>ACTIVITY REGULATION</scope>
    <scope>LACK OF ATPASE ACTIVITY</scope>
    <scope>MUTAGENESIS OF ARG-215; ARG-288; HIS-338 AND ASP-389</scope>
</reference>
<reference key="11">
    <citation type="journal article" date="2018" name="Mol. Microbiol.">
        <title>Escherichia coli and Pseudomonas aeruginosa lipopolysaccharide O-antigen ligases share similar membrane topology and biochemical properties.</title>
        <authorList>
            <person name="Ruan X."/>
            <person name="Monjaras Feria J."/>
            <person name="Hamad M."/>
            <person name="Valvano M.A."/>
        </authorList>
    </citation>
    <scope>FUNCTION</scope>
    <scope>CATALYTIC ACTIVITY</scope>
    <scope>SUBUNIT</scope>
    <scope>SUBCELLULAR LOCATION</scope>
    <scope>TOPOLOGY</scope>
    <source>
        <strain>K12 / W3110 / ATCC 27325 / DSM 5911</strain>
    </source>
</reference>
<reference key="12">
    <citation type="journal article" date="2019" name="MBio">
        <title>Identifying small proteins by ribosome profiling with stalled initiation complexes.</title>
        <authorList>
            <person name="Weaver J."/>
            <person name="Mohammad F."/>
            <person name="Buskirk A.R."/>
            <person name="Storz G."/>
        </authorList>
    </citation>
    <scope>INDUCTION</scope>
    <source>
        <strain>K12 / MG1655 / ATCC 47076</strain>
    </source>
</reference>
<evidence type="ECO:0000269" key="1">
    <source>
    </source>
</evidence>
<evidence type="ECO:0000269" key="2">
    <source>
    </source>
</evidence>
<evidence type="ECO:0000269" key="3">
    <source>
    </source>
</evidence>
<evidence type="ECO:0000269" key="4">
    <source>
    </source>
</evidence>
<evidence type="ECO:0000269" key="5">
    <source>
    </source>
</evidence>
<evidence type="ECO:0000269" key="6">
    <source>
    </source>
</evidence>
<evidence type="ECO:0000303" key="7">
    <source>
    </source>
</evidence>
<evidence type="ECO:0000303" key="8">
    <source>
    </source>
</evidence>
<evidence type="ECO:0000303" key="9">
    <source>
    </source>
</evidence>
<evidence type="ECO:0000303" key="10">
    <source>
    </source>
</evidence>
<evidence type="ECO:0000305" key="11"/>
<evidence type="ECO:0000305" key="12">
    <source>
    </source>
</evidence>
<evidence type="ECO:0000305" key="13">
    <source>
    </source>
</evidence>
<evidence type="ECO:0000305" key="14">
    <source>
    </source>
</evidence>
<sequence>MLTSFKLHSLKPYTLKSSMILEIITYILCFFSMIIAFVDNTFSIKIYNITAIVCLLSLILRGRQENYNIKNLILPLSIFLIGLLDLIWYSAFKVDNSPFRATYHSYLNTAKIFIFGSFIVFLTLTSQLKSKKESVLYTLYSLSFLIAGYAMYINSIHENDRISFGVGTATGAAYSTMLIGIVSGVAILYTKKNHPFLFLLNSCAVLYVLALTQTRATLLLFPIICVAALIAYYNKSPKKFTSSIVLLIAILASIVIIFNKPIQNRYNEALNDLNSYTNANSVTSLGARLAMYEIGLNIFIKSPFSFRSAESRAESMNLLVAEHNRLRGALEFSNVHLHNEIIEAGSLKGLMGIFSTLFLYFSLFYIAYKKRALGLLILTLGIVGIGLSDVIIWARSIPIIIISAIVLLLVINNRNNTIN</sequence>
<keyword id="KW-0997">Cell inner membrane</keyword>
<keyword id="KW-1003">Cell membrane</keyword>
<keyword id="KW-0328">Glycosyltransferase</keyword>
<keyword id="KW-0448">Lipopolysaccharide biosynthesis</keyword>
<keyword id="KW-0472">Membrane</keyword>
<keyword id="KW-1185">Reference proteome</keyword>
<keyword id="KW-0808">Transferase</keyword>
<keyword id="KW-0812">Transmembrane</keyword>
<keyword id="KW-1133">Transmembrane helix</keyword>
<protein>
    <recommendedName>
        <fullName evidence="8">O-antigen ligase</fullName>
        <ecNumber evidence="4 5">2.4.99.26</ecNumber>
    </recommendedName>
    <alternativeName>
        <fullName evidence="10">Surface polymer:lipid A-core ligase</fullName>
    </alternativeName>
</protein>
<dbReference type="EC" id="2.4.99.26" evidence="4 5"/>
<dbReference type="EMBL" id="M95398">
    <property type="protein sequence ID" value="AAA24524.1"/>
    <property type="molecule type" value="Genomic_DNA"/>
</dbReference>
<dbReference type="EMBL" id="U00039">
    <property type="protein sequence ID" value="AAB18599.1"/>
    <property type="molecule type" value="Genomic_DNA"/>
</dbReference>
<dbReference type="EMBL" id="U00096">
    <property type="protein sequence ID" value="AAC76646.1"/>
    <property type="molecule type" value="Genomic_DNA"/>
</dbReference>
<dbReference type="EMBL" id="AP009048">
    <property type="protein sequence ID" value="BAE77670.1"/>
    <property type="molecule type" value="Genomic_DNA"/>
</dbReference>
<dbReference type="PIR" id="S47843">
    <property type="entry name" value="S47843"/>
</dbReference>
<dbReference type="RefSeq" id="NP_418079.1">
    <property type="nucleotide sequence ID" value="NC_000913.3"/>
</dbReference>
<dbReference type="RefSeq" id="WP_001395405.1">
    <property type="nucleotide sequence ID" value="NZ_LN832404.1"/>
</dbReference>
<dbReference type="SMR" id="P27243"/>
<dbReference type="BioGRID" id="4263298">
    <property type="interactions" value="155"/>
</dbReference>
<dbReference type="DIP" id="DIP-10673N"/>
<dbReference type="FunCoup" id="P27243">
    <property type="interactions" value="86"/>
</dbReference>
<dbReference type="IntAct" id="P27243">
    <property type="interactions" value="1"/>
</dbReference>
<dbReference type="STRING" id="511145.b3622"/>
<dbReference type="TCDB" id="9.B.67.5.1">
    <property type="family name" value="the o-antigen polymerase (oap) family"/>
</dbReference>
<dbReference type="PaxDb" id="511145-b3622"/>
<dbReference type="EnsemblBacteria" id="AAC76646">
    <property type="protein sequence ID" value="AAC76646"/>
    <property type="gene ID" value="b3622"/>
</dbReference>
<dbReference type="GeneID" id="948148"/>
<dbReference type="KEGG" id="ecj:JW3597"/>
<dbReference type="KEGG" id="eco:b3622"/>
<dbReference type="KEGG" id="ecoc:C3026_19635"/>
<dbReference type="PATRIC" id="fig|1411691.4.peg.3084"/>
<dbReference type="EchoBASE" id="EB1394"/>
<dbReference type="eggNOG" id="COG3307">
    <property type="taxonomic scope" value="Bacteria"/>
</dbReference>
<dbReference type="HOGENOM" id="CLU_054167_0_0_6"/>
<dbReference type="InParanoid" id="P27243"/>
<dbReference type="OMA" id="MLIAWLM"/>
<dbReference type="OrthoDB" id="6502028at2"/>
<dbReference type="BioCyc" id="EcoCyc:EG11424-MONOMER"/>
<dbReference type="BioCyc" id="MetaCyc:EG11424-MONOMER"/>
<dbReference type="UniPathway" id="UPA00030"/>
<dbReference type="PHI-base" id="PHI:3106"/>
<dbReference type="PHI-base" id="PHI:9414"/>
<dbReference type="PRO" id="PR:P27243"/>
<dbReference type="Proteomes" id="UP000000625">
    <property type="component" value="Chromosome"/>
</dbReference>
<dbReference type="GO" id="GO:0005886">
    <property type="term" value="C:plasma membrane"/>
    <property type="evidence" value="ECO:0000314"/>
    <property type="project" value="EcoCyc"/>
</dbReference>
<dbReference type="GO" id="GO:0016757">
    <property type="term" value="F:glycosyltransferase activity"/>
    <property type="evidence" value="ECO:0000315"/>
    <property type="project" value="EcoCyc"/>
</dbReference>
<dbReference type="GO" id="GO:0009244">
    <property type="term" value="P:lipopolysaccharide core region biosynthetic process"/>
    <property type="evidence" value="ECO:0007669"/>
    <property type="project" value="UniProtKB-UniPathway"/>
</dbReference>
<dbReference type="InterPro" id="IPR007016">
    <property type="entry name" value="O-antigen_ligase-rel_domated"/>
</dbReference>
<dbReference type="InterPro" id="IPR051533">
    <property type="entry name" value="WaaL-like"/>
</dbReference>
<dbReference type="PANTHER" id="PTHR37422:SF17">
    <property type="entry name" value="O-ANTIGEN LIGASE"/>
    <property type="match status" value="1"/>
</dbReference>
<dbReference type="PANTHER" id="PTHR37422">
    <property type="entry name" value="TEICHURONIC ACID BIOSYNTHESIS PROTEIN TUAE"/>
    <property type="match status" value="1"/>
</dbReference>
<dbReference type="Pfam" id="PF04932">
    <property type="entry name" value="Wzy_C"/>
    <property type="match status" value="1"/>
</dbReference>
<proteinExistence type="evidence at protein level"/>
<organism>
    <name type="scientific">Escherichia coli (strain K12)</name>
    <dbReference type="NCBI Taxonomy" id="83333"/>
    <lineage>
        <taxon>Bacteria</taxon>
        <taxon>Pseudomonadati</taxon>
        <taxon>Pseudomonadota</taxon>
        <taxon>Gammaproteobacteria</taxon>
        <taxon>Enterobacterales</taxon>
        <taxon>Enterobacteriaceae</taxon>
        <taxon>Escherichia</taxon>
    </lineage>
</organism>
<name>WAAL_ECOLI</name>
<accession>P27243</accession>
<accession>Q2M7T6</accession>
<comment type="function">
    <text evidence="2 4 5 14">Transferase involved in the biosynthesis of the lipopolysaccharide (LPS) (PubMed:21983211). In vitro, catalyzes the transfer of a polymerized O-antigen molecule from its polyprenyl diphosphate membrane anchor to a terminal sugar of the lipid A-core oligosaccharide, finalizing the biosynthesis of the lipopolysaccharide (PubMed:21983211, PubMed:30047569). The enzyme is functional and can be used to give diverse hybrid O-antigens in vitro, but K12 strains do not produce the O-antigen in vivo due to mutations in the rfb gene cluster (Probable). K12 strains are phenotypically rough, their lipopolysaccharide having a complete core structure, but no O-antigen (Probable). In highly mucoid K12 strains, WaaL can ligate colanic acid (CA or M-antigen) repeats to a significant proportion of lipopolysaccharide (LPS) core acceptor molecules, forming the LPS glycoform M(LPS) (PubMed:17227761). The attachment point was identified as O-7 of the L-glycero-D-manno-heptose of the outer LPS core, the same position used for O-antigen ligation (PubMed:17227761). Cannot catalyze ATP hydrolysis in vitro (PubMed:21983211).</text>
</comment>
<comment type="catalytic activity">
    <reaction evidence="4 5">
        <text>a lipid-linked O antigen + a lipid A-core oligosaccharide = a lipopolysaccharide + a polyisoprenyl diphosphate.</text>
        <dbReference type="EC" id="2.4.99.26"/>
    </reaction>
</comment>
<comment type="activity regulation">
    <text evidence="4">Activity does not require ATP and magnesium ions.</text>
</comment>
<comment type="pathway">
    <text evidence="13">Bacterial outer membrane biogenesis; lipopolysaccharide biosynthesis.</text>
</comment>
<comment type="subunit">
    <text evidence="5">Homodimer.</text>
</comment>
<comment type="subcellular location">
    <subcellularLocation>
        <location evidence="1 3 5">Cell inner membrane</location>
        <topology evidence="3 5 12">Multi-pass membrane protein</topology>
    </subcellularLocation>
</comment>
<comment type="induction">
    <text evidence="6">Expressed in both exponential and stationary phase in rich medium (at protein level).</text>
</comment>
<comment type="disruption phenotype">
    <text evidence="2">Deletion of the gene has no appreciable effect on the LPS profiles (PubMed:17227761). Deletion prevents formation of M(LPS) when colanic acid synthesis is induced (PubMed:17227761).</text>
</comment>